<evidence type="ECO:0000255" key="1">
    <source>
        <dbReference type="HAMAP-Rule" id="MF_00291"/>
    </source>
</evidence>
<evidence type="ECO:0000256" key="2">
    <source>
        <dbReference type="SAM" id="MobiDB-lite"/>
    </source>
</evidence>
<evidence type="ECO:0000305" key="3"/>
<comment type="similarity">
    <text evidence="1">Belongs to the universal ribosomal protein uS2 family.</text>
</comment>
<organism>
    <name type="scientific">Crocosphaera subtropica (strain ATCC 51142 / BH68)</name>
    <name type="common">Cyanothece sp. (strain ATCC 51142)</name>
    <dbReference type="NCBI Taxonomy" id="43989"/>
    <lineage>
        <taxon>Bacteria</taxon>
        <taxon>Bacillati</taxon>
        <taxon>Cyanobacteriota</taxon>
        <taxon>Cyanophyceae</taxon>
        <taxon>Oscillatoriophycideae</taxon>
        <taxon>Chroococcales</taxon>
        <taxon>Aphanothecaceae</taxon>
        <taxon>Crocosphaera</taxon>
        <taxon>Crocosphaera subtropica</taxon>
    </lineage>
</organism>
<sequence length="269" mass="30666">MAVVSLEDLLNAGVHFGHQTRRWNPKMSQYIYTARNGVHIIDLVQTAQLMEDAYQYVRNNADKGKRFLFVGTKRQAAGIIAQEASRCGANYVNQRWLGGMLTNWETIKTRVERLKELEAMEESGQIARRPKKEASVLRRELGKLQKYLGGIKTMRRPPDVVVIVDQRREYNAIQECQKLGIPMISLLDTNCDPDYADIPIPANDDAIRSIKLILGKLADAIYEGRHGQLDSDDDYEEFDESLAEGDYDDYDEEEDEDSETVSSQEGEEE</sequence>
<name>RS2_CROS5</name>
<dbReference type="EMBL" id="CP000806">
    <property type="protein sequence ID" value="ACB50056.1"/>
    <property type="molecule type" value="Genomic_DNA"/>
</dbReference>
<dbReference type="RefSeq" id="WP_009545948.1">
    <property type="nucleotide sequence ID" value="NC_010546.1"/>
</dbReference>
<dbReference type="SMR" id="B1WQZ8"/>
<dbReference type="STRING" id="43989.cce_0705"/>
<dbReference type="KEGG" id="cyt:cce_0705"/>
<dbReference type="eggNOG" id="COG0052">
    <property type="taxonomic scope" value="Bacteria"/>
</dbReference>
<dbReference type="HOGENOM" id="CLU_040318_1_2_3"/>
<dbReference type="OrthoDB" id="9808036at2"/>
<dbReference type="Proteomes" id="UP000001203">
    <property type="component" value="Chromosome circular"/>
</dbReference>
<dbReference type="GO" id="GO:0022627">
    <property type="term" value="C:cytosolic small ribosomal subunit"/>
    <property type="evidence" value="ECO:0007669"/>
    <property type="project" value="TreeGrafter"/>
</dbReference>
<dbReference type="GO" id="GO:0003735">
    <property type="term" value="F:structural constituent of ribosome"/>
    <property type="evidence" value="ECO:0007669"/>
    <property type="project" value="InterPro"/>
</dbReference>
<dbReference type="GO" id="GO:0006412">
    <property type="term" value="P:translation"/>
    <property type="evidence" value="ECO:0007669"/>
    <property type="project" value="UniProtKB-UniRule"/>
</dbReference>
<dbReference type="CDD" id="cd01425">
    <property type="entry name" value="RPS2"/>
    <property type="match status" value="1"/>
</dbReference>
<dbReference type="FunFam" id="1.10.287.610:FF:000001">
    <property type="entry name" value="30S ribosomal protein S2"/>
    <property type="match status" value="1"/>
</dbReference>
<dbReference type="Gene3D" id="3.40.50.10490">
    <property type="entry name" value="Glucose-6-phosphate isomerase like protein, domain 1"/>
    <property type="match status" value="1"/>
</dbReference>
<dbReference type="Gene3D" id="1.10.287.610">
    <property type="entry name" value="Helix hairpin bin"/>
    <property type="match status" value="1"/>
</dbReference>
<dbReference type="HAMAP" id="MF_00291_B">
    <property type="entry name" value="Ribosomal_uS2_B"/>
    <property type="match status" value="1"/>
</dbReference>
<dbReference type="InterPro" id="IPR001865">
    <property type="entry name" value="Ribosomal_uS2"/>
</dbReference>
<dbReference type="InterPro" id="IPR005706">
    <property type="entry name" value="Ribosomal_uS2_bac/mit/plastid"/>
</dbReference>
<dbReference type="InterPro" id="IPR018130">
    <property type="entry name" value="Ribosomal_uS2_CS"/>
</dbReference>
<dbReference type="InterPro" id="IPR023591">
    <property type="entry name" value="Ribosomal_uS2_flav_dom_sf"/>
</dbReference>
<dbReference type="NCBIfam" id="TIGR01011">
    <property type="entry name" value="rpsB_bact"/>
    <property type="match status" value="1"/>
</dbReference>
<dbReference type="PANTHER" id="PTHR12534">
    <property type="entry name" value="30S RIBOSOMAL PROTEIN S2 PROKARYOTIC AND ORGANELLAR"/>
    <property type="match status" value="1"/>
</dbReference>
<dbReference type="PANTHER" id="PTHR12534:SF0">
    <property type="entry name" value="SMALL RIBOSOMAL SUBUNIT PROTEIN US2M"/>
    <property type="match status" value="1"/>
</dbReference>
<dbReference type="Pfam" id="PF00318">
    <property type="entry name" value="Ribosomal_S2"/>
    <property type="match status" value="1"/>
</dbReference>
<dbReference type="PRINTS" id="PR00395">
    <property type="entry name" value="RIBOSOMALS2"/>
</dbReference>
<dbReference type="SUPFAM" id="SSF52313">
    <property type="entry name" value="Ribosomal protein S2"/>
    <property type="match status" value="1"/>
</dbReference>
<dbReference type="PROSITE" id="PS00962">
    <property type="entry name" value="RIBOSOMAL_S2_1"/>
    <property type="match status" value="1"/>
</dbReference>
<dbReference type="PROSITE" id="PS00963">
    <property type="entry name" value="RIBOSOMAL_S2_2"/>
    <property type="match status" value="1"/>
</dbReference>
<proteinExistence type="inferred from homology"/>
<feature type="chain" id="PRO_1000115012" description="Small ribosomal subunit protein uS2">
    <location>
        <begin position="1"/>
        <end position="269"/>
    </location>
</feature>
<feature type="region of interest" description="Disordered" evidence="2">
    <location>
        <begin position="228"/>
        <end position="269"/>
    </location>
</feature>
<feature type="compositionally biased region" description="Acidic residues" evidence="2">
    <location>
        <begin position="230"/>
        <end position="269"/>
    </location>
</feature>
<accession>B1WQZ8</accession>
<reference key="1">
    <citation type="journal article" date="2008" name="Proc. Natl. Acad. Sci. U.S.A.">
        <title>The genome of Cyanothece 51142, a unicellular diazotrophic cyanobacterium important in the marine nitrogen cycle.</title>
        <authorList>
            <person name="Welsh E.A."/>
            <person name="Liberton M."/>
            <person name="Stoeckel J."/>
            <person name="Loh T."/>
            <person name="Elvitigala T."/>
            <person name="Wang C."/>
            <person name="Wollam A."/>
            <person name="Fulton R.S."/>
            <person name="Clifton S.W."/>
            <person name="Jacobs J.M."/>
            <person name="Aurora R."/>
            <person name="Ghosh B.K."/>
            <person name="Sherman L.A."/>
            <person name="Smith R.D."/>
            <person name="Wilson R.K."/>
            <person name="Pakrasi H.B."/>
        </authorList>
    </citation>
    <scope>NUCLEOTIDE SEQUENCE [LARGE SCALE GENOMIC DNA]</scope>
    <source>
        <strain>ATCC 51142 / BH68</strain>
    </source>
</reference>
<protein>
    <recommendedName>
        <fullName evidence="1">Small ribosomal subunit protein uS2</fullName>
    </recommendedName>
    <alternativeName>
        <fullName evidence="3">30S ribosomal protein S2</fullName>
    </alternativeName>
</protein>
<keyword id="KW-1185">Reference proteome</keyword>
<keyword id="KW-0687">Ribonucleoprotein</keyword>
<keyword id="KW-0689">Ribosomal protein</keyword>
<gene>
    <name evidence="1" type="primary">rpsB</name>
    <name evidence="1" type="synonym">rps2</name>
    <name type="ordered locus">cce_0705</name>
</gene>